<name>ASIP_MACFU</name>
<organism>
    <name type="scientific">Macaca fuscata fuscata</name>
    <name type="common">Japanese macaque</name>
    <dbReference type="NCBI Taxonomy" id="9543"/>
    <lineage>
        <taxon>Eukaryota</taxon>
        <taxon>Metazoa</taxon>
        <taxon>Chordata</taxon>
        <taxon>Craniata</taxon>
        <taxon>Vertebrata</taxon>
        <taxon>Euteleostomi</taxon>
        <taxon>Mammalia</taxon>
        <taxon>Eutheria</taxon>
        <taxon>Euarchontoglires</taxon>
        <taxon>Primates</taxon>
        <taxon>Haplorrhini</taxon>
        <taxon>Catarrhini</taxon>
        <taxon>Cercopithecidae</taxon>
        <taxon>Cercopithecinae</taxon>
        <taxon>Macaca</taxon>
    </lineage>
</organism>
<feature type="signal peptide" evidence="4">
    <location>
        <begin position="1"/>
        <end position="22"/>
    </location>
</feature>
<feature type="chain" id="PRO_0000323393" description="Agouti-signaling protein">
    <location>
        <begin position="23"/>
        <end position="132"/>
    </location>
</feature>
<feature type="domain" description="Agouti" evidence="5">
    <location>
        <begin position="93"/>
        <end position="132"/>
    </location>
</feature>
<feature type="region of interest" description="Disordered" evidence="6">
    <location>
        <begin position="61"/>
        <end position="87"/>
    </location>
</feature>
<feature type="compositionally biased region" description="Basic and acidic residues" evidence="6">
    <location>
        <begin position="61"/>
        <end position="79"/>
    </location>
</feature>
<feature type="glycosylation site" description="N-linked (GlcNAc...) asparagine" evidence="4">
    <location>
        <position position="39"/>
    </location>
</feature>
<feature type="disulfide bond" evidence="5">
    <location>
        <begin position="93"/>
        <end position="108"/>
    </location>
</feature>
<feature type="disulfide bond" evidence="5">
    <location>
        <begin position="100"/>
        <end position="114"/>
    </location>
</feature>
<feature type="disulfide bond" evidence="5">
    <location>
        <begin position="107"/>
        <end position="125"/>
    </location>
</feature>
<feature type="disulfide bond" evidence="5">
    <location>
        <begin position="111"/>
        <end position="132"/>
    </location>
</feature>
<feature type="disulfide bond" evidence="5">
    <location>
        <begin position="116"/>
        <end position="123"/>
    </location>
</feature>
<dbReference type="EMBL" id="AB299208">
    <property type="protein sequence ID" value="BAF80792.1"/>
    <property type="molecule type" value="Genomic_DNA"/>
</dbReference>
<dbReference type="GlyCosmos" id="A8CEM0">
    <property type="glycosylation" value="1 site, No reported glycans"/>
</dbReference>
<dbReference type="GO" id="GO:0005615">
    <property type="term" value="C:extracellular space"/>
    <property type="evidence" value="ECO:0000250"/>
    <property type="project" value="UniProtKB"/>
</dbReference>
<dbReference type="GO" id="GO:0031779">
    <property type="term" value="F:melanocortin receptor binding"/>
    <property type="evidence" value="ECO:0007669"/>
    <property type="project" value="TreeGrafter"/>
</dbReference>
<dbReference type="GO" id="GO:0005184">
    <property type="term" value="F:neuropeptide hormone activity"/>
    <property type="evidence" value="ECO:0007669"/>
    <property type="project" value="TreeGrafter"/>
</dbReference>
<dbReference type="GO" id="GO:0009755">
    <property type="term" value="P:hormone-mediated signaling pathway"/>
    <property type="evidence" value="ECO:0007669"/>
    <property type="project" value="InterPro"/>
</dbReference>
<dbReference type="GO" id="GO:0042438">
    <property type="term" value="P:melanin biosynthetic process"/>
    <property type="evidence" value="ECO:0000250"/>
    <property type="project" value="UniProtKB"/>
</dbReference>
<dbReference type="GO" id="GO:0032438">
    <property type="term" value="P:melanosome organization"/>
    <property type="evidence" value="ECO:0007669"/>
    <property type="project" value="TreeGrafter"/>
</dbReference>
<dbReference type="FunFam" id="4.10.760.10:FF:000002">
    <property type="entry name" value="Agouti-signaling protein"/>
    <property type="match status" value="1"/>
</dbReference>
<dbReference type="Gene3D" id="4.10.760.10">
    <property type="entry name" value="Agouti domain"/>
    <property type="match status" value="1"/>
</dbReference>
<dbReference type="InterPro" id="IPR007733">
    <property type="entry name" value="Agouti"/>
</dbReference>
<dbReference type="InterPro" id="IPR027300">
    <property type="entry name" value="Agouti_dom"/>
</dbReference>
<dbReference type="InterPro" id="IPR036836">
    <property type="entry name" value="Agouti_dom_sf"/>
</dbReference>
<dbReference type="PANTHER" id="PTHR16551">
    <property type="entry name" value="AGOUTI RELATED"/>
    <property type="match status" value="1"/>
</dbReference>
<dbReference type="PANTHER" id="PTHR16551:SF1">
    <property type="entry name" value="AGOUTI-SIGNALING PROTEIN"/>
    <property type="match status" value="1"/>
</dbReference>
<dbReference type="Pfam" id="PF05039">
    <property type="entry name" value="Agouti"/>
    <property type="match status" value="1"/>
</dbReference>
<dbReference type="SMART" id="SM00792">
    <property type="entry name" value="Agouti"/>
    <property type="match status" value="1"/>
</dbReference>
<dbReference type="SUPFAM" id="SSF57055">
    <property type="entry name" value="Agouti-related protein"/>
    <property type="match status" value="1"/>
</dbReference>
<dbReference type="PROSITE" id="PS60024">
    <property type="entry name" value="AGOUTI_1"/>
    <property type="match status" value="1"/>
</dbReference>
<dbReference type="PROSITE" id="PS51150">
    <property type="entry name" value="AGOUTI_2"/>
    <property type="match status" value="1"/>
</dbReference>
<protein>
    <recommendedName>
        <fullName>Agouti-signaling protein</fullName>
        <shortName>ASP</shortName>
    </recommendedName>
    <alternativeName>
        <fullName>Agouti switch protein</fullName>
    </alternativeName>
</protein>
<accession>A8CEM0</accession>
<evidence type="ECO:0000250" key="1"/>
<evidence type="ECO:0000250" key="2">
    <source>
        <dbReference type="UniProtKB" id="P42127"/>
    </source>
</evidence>
<evidence type="ECO:0000250" key="3">
    <source>
        <dbReference type="UniProtKB" id="Q03288"/>
    </source>
</evidence>
<evidence type="ECO:0000255" key="4"/>
<evidence type="ECO:0000255" key="5">
    <source>
        <dbReference type="PROSITE-ProRule" id="PRU00494"/>
    </source>
</evidence>
<evidence type="ECO:0000256" key="6">
    <source>
        <dbReference type="SAM" id="MobiDB-lite"/>
    </source>
</evidence>
<reference key="1">
    <citation type="submission" date="2007-03" db="EMBL/GenBank/DDBJ databases">
        <title>Association of the agouti signaling protein gene with coat color variation in the macaques.</title>
        <authorList>
            <person name="Nakayama K."/>
            <person name="Shotake T."/>
            <person name="Takenaka O."/>
            <person name="Ishida T."/>
        </authorList>
    </citation>
    <scope>NUCLEOTIDE SEQUENCE [GENOMIC DNA]</scope>
</reference>
<proteinExistence type="inferred from homology"/>
<sequence>MDVTRLLLATLLVFLCFFTAYSHLPPEEKLRDDRSLRSNSSVNLLDFPSVSIMALNKNSKEISRKEAEKKRSSKKEASMKKVARPRTPLSAPCVATRDSCKPPAPACCDPCASCQCRFFRSACSCRVLSLNC</sequence>
<keyword id="KW-1015">Disulfide bond</keyword>
<keyword id="KW-0325">Glycoprotein</keyword>
<keyword id="KW-0960">Knottin</keyword>
<keyword id="KW-0964">Secreted</keyword>
<keyword id="KW-0732">Signal</keyword>
<gene>
    <name type="primary">ASIP</name>
</gene>
<comment type="function">
    <text evidence="3">Involved in the regulation of melanogenesis. The binding of ASP to MC1R precludes alpha-MSH initiated signaling and thus blocks production of cAMP, leading to a down-regulation of eumelanogenesis (brown/black pigment) and thus increasing synthesis of pheomelanin (yellow/red pigment) (By similarity).</text>
</comment>
<comment type="subcellular location">
    <subcellularLocation>
        <location evidence="2">Secreted</location>
    </subcellularLocation>
</comment>
<comment type="domain">
    <text evidence="1">The presence of a 'disulfide through disulfide knot' structurally defines this protein as a knottin.</text>
</comment>